<name>RUVA_XANCB</name>
<comment type="function">
    <text evidence="1">The RuvA-RuvB-RuvC complex processes Holliday junction (HJ) DNA during genetic recombination and DNA repair, while the RuvA-RuvB complex plays an important role in the rescue of blocked DNA replication forks via replication fork reversal (RFR). RuvA specifically binds to HJ cruciform DNA, conferring on it an open structure. The RuvB hexamer acts as an ATP-dependent pump, pulling dsDNA into and through the RuvAB complex. HJ branch migration allows RuvC to scan DNA until it finds its consensus sequence, where it cleaves and resolves the cruciform DNA.</text>
</comment>
<comment type="subunit">
    <text evidence="1">Homotetramer. Forms an RuvA(8)-RuvB(12)-Holliday junction (HJ) complex. HJ DNA is sandwiched between 2 RuvA tetramers; dsDNA enters through RuvA and exits via RuvB. An RuvB hexamer assembles on each DNA strand where it exits the tetramer. Each RuvB hexamer is contacted by two RuvA subunits (via domain III) on 2 adjacent RuvB subunits; this complex drives branch migration. In the full resolvosome a probable DNA-RuvA(4)-RuvB(12)-RuvC(2) complex forms which resolves the HJ.</text>
</comment>
<comment type="subcellular location">
    <subcellularLocation>
        <location evidence="1">Cytoplasm</location>
    </subcellularLocation>
</comment>
<comment type="domain">
    <text evidence="1">Has three domains with a flexible linker between the domains II and III and assumes an 'L' shape. Domain III is highly mobile and contacts RuvB.</text>
</comment>
<comment type="similarity">
    <text evidence="1">Belongs to the RuvA family.</text>
</comment>
<proteinExistence type="inferred from homology"/>
<protein>
    <recommendedName>
        <fullName evidence="1">Holliday junction branch migration complex subunit RuvA</fullName>
    </recommendedName>
</protein>
<evidence type="ECO:0000255" key="1">
    <source>
        <dbReference type="HAMAP-Rule" id="MF_00031"/>
    </source>
</evidence>
<keyword id="KW-0963">Cytoplasm</keyword>
<keyword id="KW-0227">DNA damage</keyword>
<keyword id="KW-0233">DNA recombination</keyword>
<keyword id="KW-0234">DNA repair</keyword>
<keyword id="KW-0238">DNA-binding</keyword>
<dbReference type="EMBL" id="AM920689">
    <property type="protein sequence ID" value="CAP50519.1"/>
    <property type="molecule type" value="Genomic_DNA"/>
</dbReference>
<dbReference type="SMR" id="B0RPY4"/>
<dbReference type="KEGG" id="xca:xcc-b100_1171"/>
<dbReference type="HOGENOM" id="CLU_087936_0_0_6"/>
<dbReference type="Proteomes" id="UP000001188">
    <property type="component" value="Chromosome"/>
</dbReference>
<dbReference type="GO" id="GO:0005737">
    <property type="term" value="C:cytoplasm"/>
    <property type="evidence" value="ECO:0007669"/>
    <property type="project" value="UniProtKB-SubCell"/>
</dbReference>
<dbReference type="GO" id="GO:0009379">
    <property type="term" value="C:Holliday junction helicase complex"/>
    <property type="evidence" value="ECO:0007669"/>
    <property type="project" value="InterPro"/>
</dbReference>
<dbReference type="GO" id="GO:0048476">
    <property type="term" value="C:Holliday junction resolvase complex"/>
    <property type="evidence" value="ECO:0007669"/>
    <property type="project" value="UniProtKB-UniRule"/>
</dbReference>
<dbReference type="GO" id="GO:0005524">
    <property type="term" value="F:ATP binding"/>
    <property type="evidence" value="ECO:0007669"/>
    <property type="project" value="InterPro"/>
</dbReference>
<dbReference type="GO" id="GO:0000400">
    <property type="term" value="F:four-way junction DNA binding"/>
    <property type="evidence" value="ECO:0007669"/>
    <property type="project" value="UniProtKB-UniRule"/>
</dbReference>
<dbReference type="GO" id="GO:0009378">
    <property type="term" value="F:four-way junction helicase activity"/>
    <property type="evidence" value="ECO:0007669"/>
    <property type="project" value="InterPro"/>
</dbReference>
<dbReference type="GO" id="GO:0006310">
    <property type="term" value="P:DNA recombination"/>
    <property type="evidence" value="ECO:0007669"/>
    <property type="project" value="UniProtKB-UniRule"/>
</dbReference>
<dbReference type="GO" id="GO:0006281">
    <property type="term" value="P:DNA repair"/>
    <property type="evidence" value="ECO:0007669"/>
    <property type="project" value="UniProtKB-UniRule"/>
</dbReference>
<dbReference type="Gene3D" id="1.10.150.20">
    <property type="entry name" value="5' to 3' exonuclease, C-terminal subdomain"/>
    <property type="match status" value="1"/>
</dbReference>
<dbReference type="Gene3D" id="1.10.8.10">
    <property type="entry name" value="DNA helicase RuvA subunit, C-terminal domain"/>
    <property type="match status" value="1"/>
</dbReference>
<dbReference type="Gene3D" id="2.40.50.140">
    <property type="entry name" value="Nucleic acid-binding proteins"/>
    <property type="match status" value="1"/>
</dbReference>
<dbReference type="HAMAP" id="MF_00031">
    <property type="entry name" value="DNA_HJ_migration_RuvA"/>
    <property type="match status" value="1"/>
</dbReference>
<dbReference type="InterPro" id="IPR013849">
    <property type="entry name" value="DNA_helicase_Holl-junc_RuvA_I"/>
</dbReference>
<dbReference type="InterPro" id="IPR003583">
    <property type="entry name" value="Hlx-hairpin-Hlx_DNA-bd_motif"/>
</dbReference>
<dbReference type="InterPro" id="IPR012340">
    <property type="entry name" value="NA-bd_OB-fold"/>
</dbReference>
<dbReference type="InterPro" id="IPR000085">
    <property type="entry name" value="RuvA"/>
</dbReference>
<dbReference type="InterPro" id="IPR010994">
    <property type="entry name" value="RuvA_2-like"/>
</dbReference>
<dbReference type="InterPro" id="IPR011114">
    <property type="entry name" value="RuvA_C"/>
</dbReference>
<dbReference type="InterPro" id="IPR036267">
    <property type="entry name" value="RuvA_C_sf"/>
</dbReference>
<dbReference type="NCBIfam" id="TIGR00084">
    <property type="entry name" value="ruvA"/>
    <property type="match status" value="1"/>
</dbReference>
<dbReference type="Pfam" id="PF14520">
    <property type="entry name" value="HHH_5"/>
    <property type="match status" value="1"/>
</dbReference>
<dbReference type="Pfam" id="PF07499">
    <property type="entry name" value="RuvA_C"/>
    <property type="match status" value="1"/>
</dbReference>
<dbReference type="Pfam" id="PF01330">
    <property type="entry name" value="RuvA_N"/>
    <property type="match status" value="1"/>
</dbReference>
<dbReference type="SMART" id="SM00278">
    <property type="entry name" value="HhH1"/>
    <property type="match status" value="2"/>
</dbReference>
<dbReference type="SUPFAM" id="SSF46929">
    <property type="entry name" value="DNA helicase RuvA subunit, C-terminal domain"/>
    <property type="match status" value="1"/>
</dbReference>
<dbReference type="SUPFAM" id="SSF50249">
    <property type="entry name" value="Nucleic acid-binding proteins"/>
    <property type="match status" value="1"/>
</dbReference>
<dbReference type="SUPFAM" id="SSF47781">
    <property type="entry name" value="RuvA domain 2-like"/>
    <property type="match status" value="1"/>
</dbReference>
<organism>
    <name type="scientific">Xanthomonas campestris pv. campestris (strain B100)</name>
    <dbReference type="NCBI Taxonomy" id="509169"/>
    <lineage>
        <taxon>Bacteria</taxon>
        <taxon>Pseudomonadati</taxon>
        <taxon>Pseudomonadota</taxon>
        <taxon>Gammaproteobacteria</taxon>
        <taxon>Lysobacterales</taxon>
        <taxon>Lysobacteraceae</taxon>
        <taxon>Xanthomonas</taxon>
    </lineage>
</organism>
<feature type="chain" id="PRO_1000090385" description="Holliday junction branch migration complex subunit RuvA">
    <location>
        <begin position="1"/>
        <end position="194"/>
    </location>
</feature>
<feature type="region of interest" description="Domain I" evidence="1">
    <location>
        <begin position="1"/>
        <end position="64"/>
    </location>
</feature>
<feature type="region of interest" description="Domain II" evidence="1">
    <location>
        <begin position="65"/>
        <end position="140"/>
    </location>
</feature>
<feature type="region of interest" description="Flexible linker" evidence="1">
    <location>
        <begin position="140"/>
        <end position="144"/>
    </location>
</feature>
<feature type="region of interest" description="Domain III" evidence="1">
    <location>
        <begin position="145"/>
        <end position="194"/>
    </location>
</feature>
<reference key="1">
    <citation type="journal article" date="2008" name="J. Biotechnol.">
        <title>The genome of Xanthomonas campestris pv. campestris B100 and its use for the reconstruction of metabolic pathways involved in xanthan biosynthesis.</title>
        <authorList>
            <person name="Vorhoelter F.-J."/>
            <person name="Schneiker S."/>
            <person name="Goesmann A."/>
            <person name="Krause L."/>
            <person name="Bekel T."/>
            <person name="Kaiser O."/>
            <person name="Linke B."/>
            <person name="Patschkowski T."/>
            <person name="Rueckert C."/>
            <person name="Schmid J."/>
            <person name="Sidhu V.K."/>
            <person name="Sieber V."/>
            <person name="Tauch A."/>
            <person name="Watt S.A."/>
            <person name="Weisshaar B."/>
            <person name="Becker A."/>
            <person name="Niehaus K."/>
            <person name="Puehler A."/>
        </authorList>
    </citation>
    <scope>NUCLEOTIDE SEQUENCE [LARGE SCALE GENOMIC DNA]</scope>
    <source>
        <strain>B100</strain>
    </source>
</reference>
<sequence>MIGRLRGILAYKQPPWLVIDVGGVGYELEAPMSTFYDLPDVGRDVILFTHYAQKEDSVSLYGFLREGERRLFRDVQKVTGIGAKIALAVLSGVTVDEFARLITSGDITALTRIPGIGKKTAERMVVELRDRAADFSSGAPITGQLGPDAVSEATVALQQLGYKPAEAARMAREAGAEGDEVATVIRKALQAALR</sequence>
<accession>B0RPY4</accession>
<gene>
    <name evidence="1" type="primary">ruvA</name>
    <name type="ordered locus">xcc-b100_1171</name>
</gene>